<name>IF2_AYWBP</name>
<organism>
    <name type="scientific">Aster yellows witches'-broom phytoplasma (strain AYWB)</name>
    <dbReference type="NCBI Taxonomy" id="322098"/>
    <lineage>
        <taxon>Bacteria</taxon>
        <taxon>Bacillati</taxon>
        <taxon>Mycoplasmatota</taxon>
        <taxon>Mollicutes</taxon>
        <taxon>Acholeplasmatales</taxon>
        <taxon>Acholeplasmataceae</taxon>
        <taxon>Candidatus Phytoplasma</taxon>
        <taxon>16SrI (Aster yellows group)</taxon>
    </lineage>
</organism>
<proteinExistence type="inferred from homology"/>
<protein>
    <recommendedName>
        <fullName evidence="2">Translation initiation factor IF-2</fullName>
    </recommendedName>
</protein>
<accession>Q2NIQ6</accession>
<comment type="function">
    <text evidence="2">One of the essential components for the initiation of protein synthesis. Protects formylmethionyl-tRNA from spontaneous hydrolysis and promotes its binding to the 30S ribosomal subunits. Also involved in the hydrolysis of GTP during the formation of the 70S ribosomal complex.</text>
</comment>
<comment type="subcellular location">
    <subcellularLocation>
        <location evidence="2">Cytoplasm</location>
    </subcellularLocation>
</comment>
<comment type="similarity">
    <text evidence="2">Belongs to the TRAFAC class translation factor GTPase superfamily. Classic translation factor GTPase family. IF-2 subfamily.</text>
</comment>
<gene>
    <name evidence="2" type="primary">infB</name>
    <name type="ordered locus">AYWB_570</name>
</gene>
<keyword id="KW-0963">Cytoplasm</keyword>
<keyword id="KW-0342">GTP-binding</keyword>
<keyword id="KW-0396">Initiation factor</keyword>
<keyword id="KW-0547">Nucleotide-binding</keyword>
<keyword id="KW-0648">Protein biosynthesis</keyword>
<feature type="chain" id="PRO_1000008198" description="Translation initiation factor IF-2">
    <location>
        <begin position="1"/>
        <end position="623"/>
    </location>
</feature>
<feature type="domain" description="tr-type G">
    <location>
        <begin position="125"/>
        <end position="293"/>
    </location>
</feature>
<feature type="region of interest" description="Disordered" evidence="3">
    <location>
        <begin position="1"/>
        <end position="21"/>
    </location>
</feature>
<feature type="region of interest" description="Disordered" evidence="3">
    <location>
        <begin position="92"/>
        <end position="115"/>
    </location>
</feature>
<feature type="region of interest" description="G1" evidence="1">
    <location>
        <begin position="134"/>
        <end position="141"/>
    </location>
</feature>
<feature type="region of interest" description="G2" evidence="1">
    <location>
        <begin position="159"/>
        <end position="163"/>
    </location>
</feature>
<feature type="region of interest" description="G3" evidence="1">
    <location>
        <begin position="180"/>
        <end position="183"/>
    </location>
</feature>
<feature type="region of interest" description="G4" evidence="1">
    <location>
        <begin position="234"/>
        <end position="237"/>
    </location>
</feature>
<feature type="region of interest" description="G5" evidence="1">
    <location>
        <begin position="270"/>
        <end position="272"/>
    </location>
</feature>
<feature type="compositionally biased region" description="Low complexity" evidence="3">
    <location>
        <begin position="1"/>
        <end position="18"/>
    </location>
</feature>
<feature type="binding site" evidence="2">
    <location>
        <begin position="134"/>
        <end position="141"/>
    </location>
    <ligand>
        <name>GTP</name>
        <dbReference type="ChEBI" id="CHEBI:37565"/>
    </ligand>
</feature>
<feature type="binding site" evidence="2">
    <location>
        <begin position="180"/>
        <end position="184"/>
    </location>
    <ligand>
        <name>GTP</name>
        <dbReference type="ChEBI" id="CHEBI:37565"/>
    </ligand>
</feature>
<feature type="binding site" evidence="2">
    <location>
        <begin position="234"/>
        <end position="237"/>
    </location>
    <ligand>
        <name>GTP</name>
        <dbReference type="ChEBI" id="CHEBI:37565"/>
    </ligand>
</feature>
<dbReference type="EMBL" id="CP000061">
    <property type="protein sequence ID" value="ABC65687.1"/>
    <property type="molecule type" value="Genomic_DNA"/>
</dbReference>
<dbReference type="RefSeq" id="WP_011412849.1">
    <property type="nucleotide sequence ID" value="NC_007716.1"/>
</dbReference>
<dbReference type="SMR" id="Q2NIQ6"/>
<dbReference type="STRING" id="322098.AYWB_570"/>
<dbReference type="KEGG" id="ayw:AYWB_570"/>
<dbReference type="eggNOG" id="COG0532">
    <property type="taxonomic scope" value="Bacteria"/>
</dbReference>
<dbReference type="HOGENOM" id="CLU_006301_5_1_14"/>
<dbReference type="OrthoDB" id="9811804at2"/>
<dbReference type="PhylomeDB" id="Q2NIQ6"/>
<dbReference type="Proteomes" id="UP000001934">
    <property type="component" value="Chromosome"/>
</dbReference>
<dbReference type="GO" id="GO:0005829">
    <property type="term" value="C:cytosol"/>
    <property type="evidence" value="ECO:0007669"/>
    <property type="project" value="TreeGrafter"/>
</dbReference>
<dbReference type="GO" id="GO:0005525">
    <property type="term" value="F:GTP binding"/>
    <property type="evidence" value="ECO:0007669"/>
    <property type="project" value="UniProtKB-KW"/>
</dbReference>
<dbReference type="GO" id="GO:0003924">
    <property type="term" value="F:GTPase activity"/>
    <property type="evidence" value="ECO:0007669"/>
    <property type="project" value="UniProtKB-UniRule"/>
</dbReference>
<dbReference type="GO" id="GO:0003743">
    <property type="term" value="F:translation initiation factor activity"/>
    <property type="evidence" value="ECO:0007669"/>
    <property type="project" value="UniProtKB-UniRule"/>
</dbReference>
<dbReference type="CDD" id="cd01887">
    <property type="entry name" value="IF2_eIF5B"/>
    <property type="match status" value="1"/>
</dbReference>
<dbReference type="CDD" id="cd03702">
    <property type="entry name" value="IF2_mtIF2_II"/>
    <property type="match status" value="1"/>
</dbReference>
<dbReference type="CDD" id="cd03692">
    <property type="entry name" value="mtIF2_IVc"/>
    <property type="match status" value="1"/>
</dbReference>
<dbReference type="FunFam" id="2.40.30.10:FF:000008">
    <property type="entry name" value="Translation initiation factor IF-2"/>
    <property type="match status" value="1"/>
</dbReference>
<dbReference type="FunFam" id="2.40.30.10:FF:000054">
    <property type="entry name" value="Translation initiation factor IF-2"/>
    <property type="match status" value="1"/>
</dbReference>
<dbReference type="FunFam" id="3.40.50.10050:FF:000001">
    <property type="entry name" value="Translation initiation factor IF-2"/>
    <property type="match status" value="1"/>
</dbReference>
<dbReference type="FunFam" id="3.40.50.300:FF:000019">
    <property type="entry name" value="Translation initiation factor IF-2"/>
    <property type="match status" value="1"/>
</dbReference>
<dbReference type="Gene3D" id="3.40.50.300">
    <property type="entry name" value="P-loop containing nucleotide triphosphate hydrolases"/>
    <property type="match status" value="1"/>
</dbReference>
<dbReference type="Gene3D" id="2.40.30.10">
    <property type="entry name" value="Translation factors"/>
    <property type="match status" value="2"/>
</dbReference>
<dbReference type="Gene3D" id="3.40.50.10050">
    <property type="entry name" value="Translation initiation factor IF- 2, domain 3"/>
    <property type="match status" value="1"/>
</dbReference>
<dbReference type="HAMAP" id="MF_00100_B">
    <property type="entry name" value="IF_2_B"/>
    <property type="match status" value="1"/>
</dbReference>
<dbReference type="InterPro" id="IPR053905">
    <property type="entry name" value="EF-G-like_DII"/>
</dbReference>
<dbReference type="InterPro" id="IPR044145">
    <property type="entry name" value="IF2_II"/>
</dbReference>
<dbReference type="InterPro" id="IPR006847">
    <property type="entry name" value="IF2_N"/>
</dbReference>
<dbReference type="InterPro" id="IPR027417">
    <property type="entry name" value="P-loop_NTPase"/>
</dbReference>
<dbReference type="InterPro" id="IPR005225">
    <property type="entry name" value="Small_GTP-bd"/>
</dbReference>
<dbReference type="InterPro" id="IPR000795">
    <property type="entry name" value="T_Tr_GTP-bd_dom"/>
</dbReference>
<dbReference type="InterPro" id="IPR000178">
    <property type="entry name" value="TF_IF2_bacterial-like"/>
</dbReference>
<dbReference type="InterPro" id="IPR015760">
    <property type="entry name" value="TIF_IF2"/>
</dbReference>
<dbReference type="InterPro" id="IPR023115">
    <property type="entry name" value="TIF_IF2_dom3"/>
</dbReference>
<dbReference type="InterPro" id="IPR036925">
    <property type="entry name" value="TIF_IF2_dom3_sf"/>
</dbReference>
<dbReference type="InterPro" id="IPR009000">
    <property type="entry name" value="Transl_B-barrel_sf"/>
</dbReference>
<dbReference type="NCBIfam" id="TIGR00487">
    <property type="entry name" value="IF-2"/>
    <property type="match status" value="1"/>
</dbReference>
<dbReference type="NCBIfam" id="TIGR00231">
    <property type="entry name" value="small_GTP"/>
    <property type="match status" value="1"/>
</dbReference>
<dbReference type="PANTHER" id="PTHR43381:SF5">
    <property type="entry name" value="TR-TYPE G DOMAIN-CONTAINING PROTEIN"/>
    <property type="match status" value="1"/>
</dbReference>
<dbReference type="PANTHER" id="PTHR43381">
    <property type="entry name" value="TRANSLATION INITIATION FACTOR IF-2-RELATED"/>
    <property type="match status" value="1"/>
</dbReference>
<dbReference type="Pfam" id="PF22042">
    <property type="entry name" value="EF-G_D2"/>
    <property type="match status" value="1"/>
</dbReference>
<dbReference type="Pfam" id="PF00009">
    <property type="entry name" value="GTP_EFTU"/>
    <property type="match status" value="1"/>
</dbReference>
<dbReference type="Pfam" id="PF11987">
    <property type="entry name" value="IF-2"/>
    <property type="match status" value="1"/>
</dbReference>
<dbReference type="Pfam" id="PF04760">
    <property type="entry name" value="IF2_N"/>
    <property type="match status" value="1"/>
</dbReference>
<dbReference type="SUPFAM" id="SSF52156">
    <property type="entry name" value="Initiation factor IF2/eIF5b, domain 3"/>
    <property type="match status" value="1"/>
</dbReference>
<dbReference type="SUPFAM" id="SSF52540">
    <property type="entry name" value="P-loop containing nucleoside triphosphate hydrolases"/>
    <property type="match status" value="1"/>
</dbReference>
<dbReference type="SUPFAM" id="SSF50447">
    <property type="entry name" value="Translation proteins"/>
    <property type="match status" value="2"/>
</dbReference>
<dbReference type="PROSITE" id="PS51722">
    <property type="entry name" value="G_TR_2"/>
    <property type="match status" value="1"/>
</dbReference>
<sequence>MTLNKKTNNENSSKTTPKLSKKTDFQNDFASKNYVFNPQDKVFQIAQVFGITSAVLIKKLLQLGLKADVNQTLEKDIVELLAKEYNIKVIEPQKEQTPPQLQPQKPPLTKSKLQAKPNQKLNLQKTPPIVTIMGHVDHGKTTLLDAIRKTRVVDQEFGGITQHIGAYQVEYQGNKITFIDTPGHEAFDKMRARGAKITDICILVVAVDDCVKPQTLEALKHAQKAQIPIIVALNKVDKPNNKTQQIMQELSSYDLLPEEWGGTTPYIAISALKREGLEKILEIILLFSEIQNLQTNPDQKAKGTVIEASLDKSLGPVATFIISDGNLKVGDIVVAGTSYGKIRSMEDENKKTPTKALPSQPVRVSGLKEVPQAGDIFYAVSNEKQARQIVSEKKTKTKETLAKPPSPLNLEDILQDLETEKPQELNIILKADTQGSLEALQGMIDKIKVSDLKVQLLRAAVGTITEKDIAFAKSSDSLLIGFNIKPAFSTLKSAQIQEVKITIHNVIYRIIEDIEQKLKSMIKPTFEEVVTGKVEVRKIFNISKVGNIAGCYVTQGIVNNSDFAKVMRNDEVLFKGKITSLKHLKDNIKSAKQGHECGILLDGFNDFEINDIIETSKLSKVEE</sequence>
<reference key="1">
    <citation type="journal article" date="2006" name="J. Bacteriol.">
        <title>Living with genome instability: the adaptation of phytoplasmas to diverse environments of their insect and plant hosts.</title>
        <authorList>
            <person name="Bai X."/>
            <person name="Zhang J."/>
            <person name="Ewing A."/>
            <person name="Miller S.A."/>
            <person name="Jancso Radek A."/>
            <person name="Shevchenko D.V."/>
            <person name="Tsukerman K."/>
            <person name="Walunas T."/>
            <person name="Lapidus A."/>
            <person name="Campbell J.W."/>
            <person name="Hogenhout S.A."/>
        </authorList>
    </citation>
    <scope>NUCLEOTIDE SEQUENCE [LARGE SCALE GENOMIC DNA]</scope>
    <source>
        <strain>AYWB</strain>
    </source>
</reference>
<evidence type="ECO:0000250" key="1"/>
<evidence type="ECO:0000255" key="2">
    <source>
        <dbReference type="HAMAP-Rule" id="MF_00100"/>
    </source>
</evidence>
<evidence type="ECO:0000256" key="3">
    <source>
        <dbReference type="SAM" id="MobiDB-lite"/>
    </source>
</evidence>